<geneLocation type="plasmid">
    <name>pGKl-1</name>
</geneLocation>
<evidence type="ECO:0000255" key="1"/>
<name>RF4_KLULA</name>
<keyword id="KW-0325">Glycoprotein</keyword>
<keyword id="KW-0614">Plasmid</keyword>
<comment type="function">
    <text>Not known.</text>
</comment>
<comment type="miscellaneous">
    <text>The presence of the two linear plasmids, termed pGKl-1 and pGKl-2, in strains of Kluyveromyces lactis confers the killer phenotype, i.e. production of toxin and resistance to it, to the host cell.</text>
</comment>
<proteinExistence type="predicted"/>
<protein>
    <recommendedName>
        <fullName>RF4 protein</fullName>
    </recommendedName>
</protein>
<accession>P09806</accession>
<dbReference type="EMBL" id="X07127">
    <property type="protein sequence ID" value="CAA30138.1"/>
    <property type="molecule type" value="Genomic_DNA"/>
</dbReference>
<dbReference type="EMBL" id="X00762">
    <property type="protein sequence ID" value="CAA25335.1"/>
    <property type="molecule type" value="Genomic_DNA"/>
</dbReference>
<dbReference type="EMBL" id="X01095">
    <property type="protein sequence ID" value="CAA25570.1"/>
    <property type="molecule type" value="Genomic_DNA"/>
</dbReference>
<dbReference type="PIR" id="S07916">
    <property type="entry name" value="S07916"/>
</dbReference>
<dbReference type="STRING" id="284590.P09806"/>
<dbReference type="GlyCosmos" id="P09806">
    <property type="glycosylation" value="3 sites, No reported glycans"/>
</dbReference>
<dbReference type="PaxDb" id="284590-P09806"/>
<dbReference type="InParanoid" id="P09806"/>
<sequence>MCLELDNNLSDYFKACTYAYYSDYENFIKYYDNEELFDEDDLNFHLCIGIRNSYNFAVKMENSGLKLTSGILSSISARYIMSNKVCDFNFKYLPSGIWYPNVPTKETCIYLLEKDPKYSLVIKTICVLLGWDDVCDKCDKICTEVCFRLSIIFNRRSFCEEDTIYNYKIHENKNILEKVEKDKYLLPETILRNKDTTLEIFFKYNYTSKQSNIEQIIDDMLYTYIDYSQNTEFGPMDCVSVDKSVYYNMVSYKPYLDININTVEFNFLNSAYVLKHHKEYPDDLCKKAVLNLLVNDIYDSNFVSLYRPFYFYTYKTLNKYMVQKLLIDFPRQRYAILVNYAIMNITEDLENYSPDIDLIRIAYASGSIEFYNIMMNKAKKEGGMCQHLDFENEKYIFKYHKYEDVDFDNLHKNNGHPLLLRATHLNFP</sequence>
<organism>
    <name type="scientific">Kluyveromyces lactis (strain ATCC 8585 / CBS 2359 / DSM 70799 / NBRC 1267 / NRRL Y-1140 / WM37)</name>
    <name type="common">Yeast</name>
    <name type="synonym">Candida sphaerica</name>
    <dbReference type="NCBI Taxonomy" id="284590"/>
    <lineage>
        <taxon>Eukaryota</taxon>
        <taxon>Fungi</taxon>
        <taxon>Dikarya</taxon>
        <taxon>Ascomycota</taxon>
        <taxon>Saccharomycotina</taxon>
        <taxon>Saccharomycetes</taxon>
        <taxon>Saccharomycetales</taxon>
        <taxon>Saccharomycetaceae</taxon>
        <taxon>Kluyveromyces</taxon>
    </lineage>
</organism>
<feature type="chain" id="PRO_0000097256" description="RF4 protein">
    <location>
        <begin position="1"/>
        <end position="428"/>
    </location>
</feature>
<feature type="glycosylation site" description="N-linked (GlcNAc...) asparagine" evidence="1">
    <location>
        <position position="8"/>
    </location>
</feature>
<feature type="glycosylation site" description="N-linked (GlcNAc...) asparagine" evidence="1">
    <location>
        <position position="205"/>
    </location>
</feature>
<feature type="glycosylation site" description="N-linked (GlcNAc...) asparagine" evidence="1">
    <location>
        <position position="344"/>
    </location>
</feature>
<reference key="1">
    <citation type="journal article" date="1985" name="Curr. Genet.">
        <title>Structure of a linear plasmid of the yeast Kluyveromyces lactis; compact organization of the killer genome.</title>
        <authorList>
            <person name="Sor F."/>
            <person name="Fukuhara H."/>
        </authorList>
    </citation>
    <scope>NUCLEOTIDE SEQUENCE [GENOMIC DNA]</scope>
    <source>
        <strain>ATCC 76492 / CBS 2359/152 / CLIB 210</strain>
    </source>
</reference>
<reference key="2">
    <citation type="journal article" date="1984" name="Nucleic Acids Res.">
        <title>Nucleotide sequence and transcription analysis of a linear DNA plasmid associated with the killer character of the yeast Kluyveromyces lactis.</title>
        <authorList>
            <person name="Stark M.J.R."/>
            <person name="Mileham A.J."/>
            <person name="Romanos M.A."/>
            <person name="Boyd A."/>
        </authorList>
    </citation>
    <scope>NUCLEOTIDE SEQUENCE [GENOMIC DNA]</scope>
    <source>
        <strain>ATCC 8585 / CBS 2359 / DSM 70799 / NBRC 1267 / NRRL Y-1140 / WM37</strain>
    </source>
</reference>
<reference key="3">
    <citation type="journal article" date="1984" name="Nucleic Acids Res.">
        <title>Cloning and nucleotide sequences of the linear DNA killer plasmids from yeast.</title>
        <authorList>
            <person name="Hishinuma F."/>
            <person name="Nakamura K."/>
            <person name="Hirai K."/>
            <person name="Nishizawa R."/>
            <person name="Gunge N."/>
            <person name="Maeda T."/>
        </authorList>
    </citation>
    <scope>NUCLEOTIDE SEQUENCE [GENOMIC DNA]</scope>
    <source>
        <strain>ATCC 52735 / 2105-1D</strain>
    </source>
</reference>
<gene>
    <name type="primary">RF4</name>
</gene>